<comment type="function">
    <text evidence="1">Cell surface-associated calcium-binding protein which plays an important role in adhesion and pathogenesis. Contributes to the resistance to killing by innate immune components in blood and thus attenuates bacterial clearance by interacting with host complement factor H/CFAH and modulating its activity. Also inhibits bacterial opsonization and killing by interacting with host complement regulator C4BPA and thus inhibiting classical complement pathway activation.</text>
</comment>
<comment type="subunit">
    <text evidence="1">Interacts with host complement factor H/CFAH (via C-terminus). Interacts with host complement regulator C4BPA.</text>
</comment>
<comment type="subcellular location">
    <subcellularLocation>
        <location evidence="3">Secreted</location>
        <location evidence="3">Cell wall</location>
        <topology evidence="3">Peptidoglycan-anchor</topology>
    </subcellularLocation>
    <text evidence="1">Anchored to the cell wall by sortase A (By similarity).</text>
</comment>
<comment type="similarity">
    <text evidence="5">Belongs to the serine-aspartate repeat-containing protein (SDr) family.</text>
</comment>
<organism>
    <name type="scientific">Staphylococcus aureus (strain USA300)</name>
    <dbReference type="NCBI Taxonomy" id="367830"/>
    <lineage>
        <taxon>Bacteria</taxon>
        <taxon>Bacillati</taxon>
        <taxon>Bacillota</taxon>
        <taxon>Bacilli</taxon>
        <taxon>Bacillales</taxon>
        <taxon>Staphylococcaceae</taxon>
        <taxon>Staphylococcus</taxon>
    </lineage>
</organism>
<keyword id="KW-0106">Calcium</keyword>
<keyword id="KW-0134">Cell wall</keyword>
<keyword id="KW-0572">Peptidoglycan-anchor</keyword>
<keyword id="KW-0677">Repeat</keyword>
<keyword id="KW-0964">Secreted</keyword>
<keyword id="KW-0732">Signal</keyword>
<keyword id="KW-0843">Virulence</keyword>
<gene>
    <name type="primary">sdrE</name>
    <name type="ordered locus">SAUSA300_0548</name>
</gene>
<reference key="1">
    <citation type="journal article" date="2006" name="Lancet">
        <title>Complete genome sequence of USA300, an epidemic clone of community-acquired meticillin-resistant Staphylococcus aureus.</title>
        <authorList>
            <person name="Diep B.A."/>
            <person name="Gill S.R."/>
            <person name="Chang R.F."/>
            <person name="Phan T.H."/>
            <person name="Chen J.H."/>
            <person name="Davidson M.G."/>
            <person name="Lin F."/>
            <person name="Lin J."/>
            <person name="Carleton H.A."/>
            <person name="Mongodin E.F."/>
            <person name="Sensabaugh G.F."/>
            <person name="Perdreau-Remington F."/>
        </authorList>
    </citation>
    <scope>NUCLEOTIDE SEQUENCE [LARGE SCALE GENOMIC DNA]</scope>
    <source>
        <strain>USA300</strain>
    </source>
</reference>
<feature type="signal peptide" evidence="2">
    <location>
        <begin position="1"/>
        <end position="52"/>
    </location>
</feature>
<feature type="chain" id="PRO_0000281161" description="Serine-aspartate repeat-containing protein E">
    <location>
        <begin position="53"/>
        <end position="1120"/>
    </location>
</feature>
<feature type="propeptide" id="PRO_0000281162" description="Removed by sortase" evidence="3">
    <location>
        <begin position="1121"/>
        <end position="1154"/>
    </location>
</feature>
<feature type="domain" description="CNA-B 1">
    <location>
        <begin position="607"/>
        <end position="719"/>
    </location>
</feature>
<feature type="domain" description="CNA-B 2">
    <location>
        <begin position="720"/>
        <end position="829"/>
    </location>
</feature>
<feature type="domain" description="CNA-B 3">
    <location>
        <begin position="830"/>
        <end position="940"/>
    </location>
</feature>
<feature type="region of interest" description="Ligand binding A region">
    <location>
        <begin position="53"/>
        <end position="606"/>
    </location>
</feature>
<feature type="region of interest" description="Disordered" evidence="4">
    <location>
        <begin position="54"/>
        <end position="230"/>
    </location>
</feature>
<feature type="region of interest" description="Disordered" evidence="4">
    <location>
        <begin position="904"/>
        <end position="1129"/>
    </location>
</feature>
<feature type="short sequence motif" description="YSIRK-G/S signaling motif" evidence="1">
    <location>
        <begin position="23"/>
        <end position="34"/>
    </location>
</feature>
<feature type="short sequence motif" description="LPXTG sorting signal" evidence="3">
    <location>
        <begin position="1117"/>
        <end position="1121"/>
    </location>
</feature>
<feature type="compositionally biased region" description="Basic and acidic residues" evidence="4">
    <location>
        <begin position="61"/>
        <end position="75"/>
    </location>
</feature>
<feature type="compositionally biased region" description="Low complexity" evidence="4">
    <location>
        <begin position="77"/>
        <end position="90"/>
    </location>
</feature>
<feature type="compositionally biased region" description="Basic and acidic residues" evidence="4">
    <location>
        <begin position="92"/>
        <end position="108"/>
    </location>
</feature>
<feature type="compositionally biased region" description="Polar residues" evidence="4">
    <location>
        <begin position="118"/>
        <end position="129"/>
    </location>
</feature>
<feature type="compositionally biased region" description="Basic and acidic residues" evidence="4">
    <location>
        <begin position="130"/>
        <end position="145"/>
    </location>
</feature>
<feature type="compositionally biased region" description="Low complexity" evidence="4">
    <location>
        <begin position="166"/>
        <end position="178"/>
    </location>
</feature>
<feature type="compositionally biased region" description="Polar residues" evidence="4">
    <location>
        <begin position="179"/>
        <end position="212"/>
    </location>
</feature>
<feature type="compositionally biased region" description="Basic and acidic residues" evidence="4">
    <location>
        <begin position="221"/>
        <end position="230"/>
    </location>
</feature>
<feature type="compositionally biased region" description="Acidic residues" evidence="4">
    <location>
        <begin position="908"/>
        <end position="918"/>
    </location>
</feature>
<feature type="compositionally biased region" description="Acidic residues" evidence="4">
    <location>
        <begin position="935"/>
        <end position="1093"/>
    </location>
</feature>
<feature type="modified residue" description="Pentaglycyl murein peptidoglycan amidated threonine" evidence="3">
    <location>
        <position position="1120"/>
    </location>
</feature>
<sequence length="1154" mass="125267">MINRDNKKAITKKGMISNRLNKFSIRKYTVGTASILVGTTLIFGLGNQEAKAAENTSTENAKQDDATTSDNKEVVSETENNSTTENNSTNPIKKETNTDSQPEAKKESTSSSTQKQQNNVTATTETKPQNIEKENVKPSTDKTATEDTSVILEEKKAPNNTNNDVTTKPSTSEPSTSEIQTKPTTPQESTNIENSQPQPTPSKVDNQVTDATNPKEPVNVSKEELKNNPEKLKELVRNDSNTDHSTKPVATAPTSVAPKRVNAKMRFAVAQPAAVASNNVNDLIKVTKQTIKVGDGKDNVAAAHDGKDIEYDTEFTIDNKVKKGDTMTINYDKNVIPSDLTDKNDPIDITDPSGEVIAKGTFDKATKQITYTFTDYVDKYEDIKSRLTLYSYIDKKTVPNETSLNLTFATAGKETSQNVTVDYQDPMVHGDSNIQSIFTKLDEDKQTIEQQIYVNPLKKSATNTKVDIAGSQVDDYGNIKLGNGSTIIDQNTEIKVYKVNSDQQLPQSNRIYDFSQYEDVTSQFDNKKSFSNNVATLDFGDINSAYIIKVVSKYTPTSDGELDIAQGTSMRTTDKYGYYNYAGYSNFIVTSNDTGGGDGTVKPEEKLYKIGDYVWEDVDKDGVQGTDSKEKPMANVLVTLTYPDGTTKSVRTDANGHYEFGGLKDGETYTVKFETPTGYLPTKVNGTTDGEKDSNGSSVTVKINGKDDMSLDTGFYKEPKYNLGDYVWEDTNKDGIQDANEPGIKDVKVTLKDSTGKVIGTTTTDASGKYKFTDLDNGNYTVEFETPAGYTPTVKNTTADDKDSNGLTTTGVIKDADNMTLDSGFYKTPKYSLGDYVWYDSNKDGKQDSTEKGIKDVTVTLQNEKGEVIGTTKTDENGKYRFDNLDSGKYKVIFEKPAGLTQTVTNTTEDDKDADGGEVDVTITDHDDFTLDNGYFEEDTSDSDSDSDSDSDSDSDSDSDSDSDSDSDSDSDSDSDSDSDSDSDSDSDSDSDSDSDSDSDSDSDSDSDSDSDSDSDSDSDSDSDSDSDSDSDSDSDSDSDSDSDSDSDSDSDSDSDSDSDSDSDSDSDSDSDSDSDSDSDSDSDSDSDSDSDSDAGKHTPVKPMSTTKDHHNKAKALPETGSENNGSNNATLFGGLFAALGSLLLFGRRKKQNK</sequence>
<name>SDRE_STAA3</name>
<protein>
    <recommendedName>
        <fullName>Serine-aspartate repeat-containing protein E</fullName>
    </recommendedName>
</protein>
<accession>Q2FJ77</accession>
<evidence type="ECO:0000250" key="1">
    <source>
        <dbReference type="UniProtKB" id="O86489"/>
    </source>
</evidence>
<evidence type="ECO:0000255" key="2"/>
<evidence type="ECO:0000255" key="3">
    <source>
        <dbReference type="PROSITE-ProRule" id="PRU00477"/>
    </source>
</evidence>
<evidence type="ECO:0000256" key="4">
    <source>
        <dbReference type="SAM" id="MobiDB-lite"/>
    </source>
</evidence>
<evidence type="ECO:0000305" key="5"/>
<dbReference type="EMBL" id="CP000255">
    <property type="protein sequence ID" value="ABD22410.1"/>
    <property type="molecule type" value="Genomic_DNA"/>
</dbReference>
<dbReference type="RefSeq" id="WP_000610319.1">
    <property type="nucleotide sequence ID" value="NZ_CP027476.1"/>
</dbReference>
<dbReference type="SMR" id="Q2FJ77"/>
<dbReference type="KEGG" id="saa:SAUSA300_0548"/>
<dbReference type="HOGENOM" id="CLU_004137_1_1_9"/>
<dbReference type="OMA" id="YSQYEDV"/>
<dbReference type="PRO" id="PR:Q2FJ77"/>
<dbReference type="Proteomes" id="UP000001939">
    <property type="component" value="Chromosome"/>
</dbReference>
<dbReference type="GO" id="GO:0005576">
    <property type="term" value="C:extracellular region"/>
    <property type="evidence" value="ECO:0007669"/>
    <property type="project" value="UniProtKB-KW"/>
</dbReference>
<dbReference type="GO" id="GO:0007155">
    <property type="term" value="P:cell adhesion"/>
    <property type="evidence" value="ECO:0007669"/>
    <property type="project" value="InterPro"/>
</dbReference>
<dbReference type="GO" id="GO:0141117">
    <property type="term" value="P:symbiont-mediated suppression of host complement activation by recruitment of complement control protein"/>
    <property type="evidence" value="ECO:0000269"/>
    <property type="project" value="SigSci"/>
</dbReference>
<dbReference type="Gene3D" id="2.60.40.1280">
    <property type="match status" value="1"/>
</dbReference>
<dbReference type="Gene3D" id="2.60.40.1290">
    <property type="match status" value="1"/>
</dbReference>
<dbReference type="Gene3D" id="2.60.40.10">
    <property type="entry name" value="Immunoglobulins"/>
    <property type="match status" value="3"/>
</dbReference>
<dbReference type="InterPro" id="IPR011266">
    <property type="entry name" value="Adhesin_Fg-bd_dom_2"/>
</dbReference>
<dbReference type="InterPro" id="IPR008966">
    <property type="entry name" value="Adhesion_dom_sf"/>
</dbReference>
<dbReference type="InterPro" id="IPR011252">
    <property type="entry name" value="Fibrogen-bd_dom1"/>
</dbReference>
<dbReference type="InterPro" id="IPR013783">
    <property type="entry name" value="Ig-like_fold"/>
</dbReference>
<dbReference type="InterPro" id="IPR019931">
    <property type="entry name" value="LPXTG_anchor"/>
</dbReference>
<dbReference type="InterPro" id="IPR050972">
    <property type="entry name" value="SDr-like"/>
</dbReference>
<dbReference type="InterPro" id="IPR033764">
    <property type="entry name" value="Sdr_B"/>
</dbReference>
<dbReference type="InterPro" id="IPR041171">
    <property type="entry name" value="SDR_Ig"/>
</dbReference>
<dbReference type="InterPro" id="IPR005877">
    <property type="entry name" value="YSIRK_signal_dom"/>
</dbReference>
<dbReference type="NCBIfam" id="TIGR01167">
    <property type="entry name" value="LPXTG_anchor"/>
    <property type="match status" value="1"/>
</dbReference>
<dbReference type="NCBIfam" id="TIGR01168">
    <property type="entry name" value="YSIRK_signal"/>
    <property type="match status" value="1"/>
</dbReference>
<dbReference type="PANTHER" id="PTHR34403">
    <property type="entry name" value="TOL-PAL SYSTEM PROTEIN TOLA"/>
    <property type="match status" value="1"/>
</dbReference>
<dbReference type="PANTHER" id="PTHR34403:SF8">
    <property type="entry name" value="TOL-PAL SYSTEM PROTEIN TOLA"/>
    <property type="match status" value="1"/>
</dbReference>
<dbReference type="Pfam" id="PF17961">
    <property type="entry name" value="Big_8"/>
    <property type="match status" value="1"/>
</dbReference>
<dbReference type="Pfam" id="PF00746">
    <property type="entry name" value="Gram_pos_anchor"/>
    <property type="match status" value="1"/>
</dbReference>
<dbReference type="Pfam" id="PF17210">
    <property type="entry name" value="SdrD_B"/>
    <property type="match status" value="3"/>
</dbReference>
<dbReference type="Pfam" id="PF10425">
    <property type="entry name" value="SdrG_C_C"/>
    <property type="match status" value="1"/>
</dbReference>
<dbReference type="Pfam" id="PF04650">
    <property type="entry name" value="YSIRK_signal"/>
    <property type="match status" value="1"/>
</dbReference>
<dbReference type="SUPFAM" id="SSF49401">
    <property type="entry name" value="Bacterial adhesins"/>
    <property type="match status" value="2"/>
</dbReference>
<dbReference type="SUPFAM" id="SSF117074">
    <property type="entry name" value="Hypothetical protein PA1324"/>
    <property type="match status" value="3"/>
</dbReference>
<dbReference type="PROSITE" id="PS50847">
    <property type="entry name" value="GRAM_POS_ANCHORING"/>
    <property type="match status" value="1"/>
</dbReference>
<proteinExistence type="inferred from homology"/>